<organism>
    <name type="scientific">Peromyscus leucopus</name>
    <name type="common">White-footed mouse</name>
    <dbReference type="NCBI Taxonomy" id="10041"/>
    <lineage>
        <taxon>Eukaryota</taxon>
        <taxon>Metazoa</taxon>
        <taxon>Chordata</taxon>
        <taxon>Craniata</taxon>
        <taxon>Vertebrata</taxon>
        <taxon>Euteleostomi</taxon>
        <taxon>Mammalia</taxon>
        <taxon>Eutheria</taxon>
        <taxon>Euarchontoglires</taxon>
        <taxon>Glires</taxon>
        <taxon>Rodentia</taxon>
        <taxon>Myomorpha</taxon>
        <taxon>Muroidea</taxon>
        <taxon>Cricetidae</taxon>
        <taxon>Neotominae</taxon>
        <taxon>Peromyscus</taxon>
    </lineage>
</organism>
<reference key="1">
    <citation type="journal article" date="1999" name="Mol. Phylogenet. Evol.">
        <title>The phylogenetic position of 'Acomyinae' (Rodentia, Mammalia) as sister group of a Murinae + Gerbillinae clade: evidence from the nuclear ribonuclease gene.</title>
        <authorList>
            <person name="Dubois J.-Y.F."/>
            <person name="Catzeflis F.M."/>
            <person name="Beintema J.J."/>
        </authorList>
    </citation>
    <scope>NUCLEOTIDE SEQUENCE [GENOMIC DNA]</scope>
</reference>
<evidence type="ECO:0000250" key="1"/>
<evidence type="ECO:0000255" key="2"/>
<evidence type="ECO:0000305" key="3"/>
<dbReference type="EC" id="4.6.1.18"/>
<dbReference type="EMBL" id="AJ005770">
    <property type="protein sequence ID" value="CAB41483.1"/>
    <property type="molecule type" value="Genomic_DNA"/>
</dbReference>
<dbReference type="SMR" id="Q9WUV5"/>
<dbReference type="GO" id="GO:0005576">
    <property type="term" value="C:extracellular region"/>
    <property type="evidence" value="ECO:0007669"/>
    <property type="project" value="UniProtKB-SubCell"/>
</dbReference>
<dbReference type="GO" id="GO:0016829">
    <property type="term" value="F:lyase activity"/>
    <property type="evidence" value="ECO:0007669"/>
    <property type="project" value="UniProtKB-KW"/>
</dbReference>
<dbReference type="GO" id="GO:0003676">
    <property type="term" value="F:nucleic acid binding"/>
    <property type="evidence" value="ECO:0007669"/>
    <property type="project" value="InterPro"/>
</dbReference>
<dbReference type="GO" id="GO:0004522">
    <property type="term" value="F:ribonuclease A activity"/>
    <property type="evidence" value="ECO:0007669"/>
    <property type="project" value="UniProtKB-EC"/>
</dbReference>
<dbReference type="GO" id="GO:0050830">
    <property type="term" value="P:defense response to Gram-positive bacterium"/>
    <property type="evidence" value="ECO:0007669"/>
    <property type="project" value="TreeGrafter"/>
</dbReference>
<dbReference type="CDD" id="cd06265">
    <property type="entry name" value="RNase_A_canonical"/>
    <property type="match status" value="1"/>
</dbReference>
<dbReference type="FunFam" id="3.10.130.10:FF:000001">
    <property type="entry name" value="Ribonuclease pancreatic"/>
    <property type="match status" value="1"/>
</dbReference>
<dbReference type="Gene3D" id="3.10.130.10">
    <property type="entry name" value="Ribonuclease A-like domain"/>
    <property type="match status" value="1"/>
</dbReference>
<dbReference type="InterPro" id="IPR001427">
    <property type="entry name" value="RNaseA"/>
</dbReference>
<dbReference type="InterPro" id="IPR036816">
    <property type="entry name" value="RNaseA-like_dom_sf"/>
</dbReference>
<dbReference type="InterPro" id="IPR023411">
    <property type="entry name" value="RNaseA_AS"/>
</dbReference>
<dbReference type="InterPro" id="IPR023412">
    <property type="entry name" value="RNaseA_domain"/>
</dbReference>
<dbReference type="PANTHER" id="PTHR11437">
    <property type="entry name" value="RIBONUCLEASE"/>
    <property type="match status" value="1"/>
</dbReference>
<dbReference type="PANTHER" id="PTHR11437:SF24">
    <property type="entry name" value="RIBONUCLEASE PANCREATIC"/>
    <property type="match status" value="1"/>
</dbReference>
<dbReference type="Pfam" id="PF00074">
    <property type="entry name" value="RnaseA"/>
    <property type="match status" value="1"/>
</dbReference>
<dbReference type="PRINTS" id="PR00794">
    <property type="entry name" value="RIBONUCLEASE"/>
</dbReference>
<dbReference type="SMART" id="SM00092">
    <property type="entry name" value="RNAse_Pc"/>
    <property type="match status" value="1"/>
</dbReference>
<dbReference type="SUPFAM" id="SSF54076">
    <property type="entry name" value="RNase A-like"/>
    <property type="match status" value="1"/>
</dbReference>
<dbReference type="PROSITE" id="PS00127">
    <property type="entry name" value="RNASE_PANCREATIC"/>
    <property type="match status" value="1"/>
</dbReference>
<gene>
    <name type="primary">RNASE1</name>
</gene>
<sequence length="148" mass="16490">MGLEKSLILFPLLVLVVGWVQPSLGKETSAMKFERHDVDSDSSSSSPTYCNQMMKRREMTKGSCKPVNTFVHESLQDIHAVCSQKNVKCKNGQTNCYKSRSALRITDCRLTGSSKYPNCEYKTSQQQKHIIVACEGNPSVPVHFDASA</sequence>
<name>RNAS1_PERLE</name>
<proteinExistence type="evidence at transcript level"/>
<comment type="function">
    <text evidence="1">Endonuclease that catalyzes the cleavage of RNA on the 3' side of pyrimidine nucleotides. Acts on single-stranded and double-stranded RNA (By similarity).</text>
</comment>
<comment type="catalytic activity">
    <reaction>
        <text>an [RNA] containing cytidine + H2O = an [RNA]-3'-cytidine-3'-phosphate + a 5'-hydroxy-ribonucleotide-3'-[RNA].</text>
        <dbReference type="EC" id="4.6.1.18"/>
    </reaction>
</comment>
<comment type="catalytic activity">
    <reaction>
        <text>an [RNA] containing uridine + H2O = an [RNA]-3'-uridine-3'-phosphate + a 5'-hydroxy-ribonucleotide-3'-[RNA].</text>
        <dbReference type="EC" id="4.6.1.18"/>
    </reaction>
</comment>
<comment type="subunit">
    <text evidence="1">Monomer. Interacts with and forms tight 1:1 complexes with RNH1. Dimerization of two such complexes may occur. Interaction with RNH1 inhibits this protein (By similarity).</text>
</comment>
<comment type="subcellular location">
    <subcellularLocation>
        <location>Secreted</location>
    </subcellularLocation>
</comment>
<comment type="tissue specificity">
    <text>Pancreas.</text>
</comment>
<comment type="similarity">
    <text evidence="3">Belongs to the pancreatic ribonuclease family.</text>
</comment>
<feature type="signal peptide" evidence="2">
    <location>
        <begin position="1"/>
        <end position="25"/>
    </location>
</feature>
<feature type="chain" id="PRO_0000030936" description="Ribonuclease pancreatic">
    <location>
        <begin position="26"/>
        <end position="148"/>
    </location>
</feature>
<feature type="active site" description="Proton donor" evidence="1">
    <location>
        <position position="143"/>
    </location>
</feature>
<feature type="binding site" evidence="1">
    <location>
        <position position="32"/>
    </location>
    <ligand>
        <name>substrate</name>
    </ligand>
</feature>
<feature type="binding site" evidence="1">
    <location>
        <position position="35"/>
    </location>
    <ligand>
        <name>substrate</name>
    </ligand>
</feature>
<feature type="binding site" evidence="1">
    <location>
        <begin position="65"/>
        <end position="69"/>
    </location>
    <ligand>
        <name>substrate</name>
    </ligand>
</feature>
<feature type="binding site" evidence="1">
    <location>
        <position position="90"/>
    </location>
    <ligand>
        <name>substrate</name>
    </ligand>
</feature>
<feature type="binding site" evidence="1">
    <location>
        <position position="109"/>
    </location>
    <ligand>
        <name>substrate</name>
    </ligand>
</feature>
<feature type="disulfide bond" evidence="1">
    <location>
        <begin position="50"/>
        <end position="108"/>
    </location>
</feature>
<feature type="disulfide bond" evidence="1">
    <location>
        <begin position="64"/>
        <end position="119"/>
    </location>
</feature>
<feature type="disulfide bond" evidence="1">
    <location>
        <begin position="82"/>
        <end position="134"/>
    </location>
</feature>
<feature type="disulfide bond" evidence="1">
    <location>
        <begin position="89"/>
        <end position="96"/>
    </location>
</feature>
<accession>Q9WUV5</accession>
<keyword id="KW-1015">Disulfide bond</keyword>
<keyword id="KW-0255">Endonuclease</keyword>
<keyword id="KW-0378">Hydrolase</keyword>
<keyword id="KW-0456">Lyase</keyword>
<keyword id="KW-0540">Nuclease</keyword>
<keyword id="KW-0964">Secreted</keyword>
<keyword id="KW-0732">Signal</keyword>
<protein>
    <recommendedName>
        <fullName>Ribonuclease pancreatic</fullName>
        <ecNumber>4.6.1.18</ecNumber>
    </recommendedName>
    <alternativeName>
        <fullName>RNase 1</fullName>
    </alternativeName>
    <alternativeName>
        <fullName>RNase A</fullName>
    </alternativeName>
</protein>